<comment type="function">
    <text evidence="1">Cell wall formation.</text>
</comment>
<comment type="catalytic activity">
    <reaction>
        <text>2 D-alanine + ATP = D-alanyl-D-alanine + ADP + phosphate + H(+)</text>
        <dbReference type="Rhea" id="RHEA:11224"/>
        <dbReference type="ChEBI" id="CHEBI:15378"/>
        <dbReference type="ChEBI" id="CHEBI:30616"/>
        <dbReference type="ChEBI" id="CHEBI:43474"/>
        <dbReference type="ChEBI" id="CHEBI:57416"/>
        <dbReference type="ChEBI" id="CHEBI:57822"/>
        <dbReference type="ChEBI" id="CHEBI:456216"/>
        <dbReference type="EC" id="6.3.2.4"/>
    </reaction>
</comment>
<comment type="cofactor">
    <cofactor evidence="1">
        <name>Mg(2+)</name>
        <dbReference type="ChEBI" id="CHEBI:18420"/>
    </cofactor>
    <cofactor evidence="1">
        <name>Mn(2+)</name>
        <dbReference type="ChEBI" id="CHEBI:29035"/>
    </cofactor>
    <text evidence="1">Binds 2 magnesium or manganese ions per subunit.</text>
</comment>
<comment type="pathway">
    <text>Cell wall biogenesis; peptidoglycan biosynthesis.</text>
</comment>
<comment type="subcellular location">
    <subcellularLocation>
        <location evidence="1">Cytoplasm</location>
    </subcellularLocation>
</comment>
<comment type="similarity">
    <text evidence="2">Belongs to the D-alanine--D-alanine ligase family.</text>
</comment>
<organism>
    <name type="scientific">Enterococcus gallinarum</name>
    <dbReference type="NCBI Taxonomy" id="1353"/>
    <lineage>
        <taxon>Bacteria</taxon>
        <taxon>Bacillati</taxon>
        <taxon>Bacillota</taxon>
        <taxon>Bacilli</taxon>
        <taxon>Lactobacillales</taxon>
        <taxon>Enterococcaceae</taxon>
        <taxon>Enterococcus</taxon>
    </lineage>
</organism>
<evidence type="ECO:0000250" key="1"/>
<evidence type="ECO:0000305" key="2"/>
<reference key="1">
    <citation type="journal article" date="1996" name="J. Mol. Evol.">
        <title>Evolution of structure and substrate specificity in D-alanine:D-alanine ligases and related enzymes.</title>
        <authorList>
            <person name="Evers S."/>
            <person name="Casadewall B."/>
            <person name="Charles M."/>
            <person name="Dutka-Malen S."/>
            <person name="Galimand M."/>
            <person name="Courvalin P."/>
        </authorList>
    </citation>
    <scope>NUCLEOTIDE SEQUENCE [GENOMIC DNA]</scope>
    <source>
        <strain>BM4174</strain>
    </source>
</reference>
<accession>Q47823</accession>
<keyword id="KW-0067">ATP-binding</keyword>
<keyword id="KW-0133">Cell shape</keyword>
<keyword id="KW-0961">Cell wall biogenesis/degradation</keyword>
<keyword id="KW-0963">Cytoplasm</keyword>
<keyword id="KW-0436">Ligase</keyword>
<keyword id="KW-0460">Magnesium</keyword>
<keyword id="KW-0464">Manganese</keyword>
<keyword id="KW-0479">Metal-binding</keyword>
<keyword id="KW-0547">Nucleotide-binding</keyword>
<keyword id="KW-0573">Peptidoglycan synthesis</keyword>
<protein>
    <recommendedName>
        <fullName>D-alanine--D-alanine ligase</fullName>
        <ecNumber>6.3.2.4</ecNumber>
    </recommendedName>
    <alternativeName>
        <fullName>D-Ala-D-Ala ligase</fullName>
    </alternativeName>
    <alternativeName>
        <fullName>D-alanylalanine synthetase</fullName>
    </alternativeName>
</protein>
<sequence length="316" mass="35261">MKIILLYGGRSAEHDVSLLSAFSVVNAVYYNYYQVQLVMITRDGQWLKGSLLTEAPTSKEVLNLTDSAYQGTPIQPGEIKEEDAIVFPLLHGPNGEDGTIQGFLETIGMPYVGAGVLTSACGMDKIMTKYILQAAGIPQVPYVPVLKNYWKENPKKVFEQCEGSLLYPMFIKPANMGSSVGITKAENREELQNALQEAYRYDTRAIVEQGIEAREIEVAVLGNEDVRTTMPGEIVKDVAFYDYNSKYLDNKIEMQIPAQIPEETQAKAQEFAKKAYTMLGGSGLSRCDFFLTNKNELFLNELNTIPALQAEFCRYP</sequence>
<dbReference type="EC" id="6.3.2.4"/>
<dbReference type="EMBL" id="U39789">
    <property type="protein sequence ID" value="AAB17903.1"/>
    <property type="molecule type" value="Genomic_DNA"/>
</dbReference>
<dbReference type="SMR" id="Q47823"/>
<dbReference type="STRING" id="1353.AL523_02645"/>
<dbReference type="UniPathway" id="UPA00219"/>
<dbReference type="GO" id="GO:0005829">
    <property type="term" value="C:cytosol"/>
    <property type="evidence" value="ECO:0007669"/>
    <property type="project" value="TreeGrafter"/>
</dbReference>
<dbReference type="GO" id="GO:0005524">
    <property type="term" value="F:ATP binding"/>
    <property type="evidence" value="ECO:0007669"/>
    <property type="project" value="UniProtKB-KW"/>
</dbReference>
<dbReference type="GO" id="GO:0008716">
    <property type="term" value="F:D-alanine-D-alanine ligase activity"/>
    <property type="evidence" value="ECO:0007669"/>
    <property type="project" value="UniProtKB-EC"/>
</dbReference>
<dbReference type="GO" id="GO:0046872">
    <property type="term" value="F:metal ion binding"/>
    <property type="evidence" value="ECO:0007669"/>
    <property type="project" value="UniProtKB-KW"/>
</dbReference>
<dbReference type="GO" id="GO:0071555">
    <property type="term" value="P:cell wall organization"/>
    <property type="evidence" value="ECO:0007669"/>
    <property type="project" value="UniProtKB-KW"/>
</dbReference>
<dbReference type="GO" id="GO:0009252">
    <property type="term" value="P:peptidoglycan biosynthetic process"/>
    <property type="evidence" value="ECO:0007669"/>
    <property type="project" value="UniProtKB-UniPathway"/>
</dbReference>
<dbReference type="GO" id="GO:0008360">
    <property type="term" value="P:regulation of cell shape"/>
    <property type="evidence" value="ECO:0007669"/>
    <property type="project" value="UniProtKB-KW"/>
</dbReference>
<dbReference type="FunFam" id="3.30.1490.20:FF:000007">
    <property type="entry name" value="D-alanine--D-alanine ligase"/>
    <property type="match status" value="1"/>
</dbReference>
<dbReference type="Gene3D" id="3.40.50.20">
    <property type="match status" value="1"/>
</dbReference>
<dbReference type="Gene3D" id="3.30.1490.20">
    <property type="entry name" value="ATP-grasp fold, A domain"/>
    <property type="match status" value="1"/>
</dbReference>
<dbReference type="Gene3D" id="3.30.470.20">
    <property type="entry name" value="ATP-grasp fold, B domain"/>
    <property type="match status" value="1"/>
</dbReference>
<dbReference type="HAMAP" id="MF_00047">
    <property type="entry name" value="Dala_Dala_lig"/>
    <property type="match status" value="1"/>
</dbReference>
<dbReference type="InterPro" id="IPR011761">
    <property type="entry name" value="ATP-grasp"/>
</dbReference>
<dbReference type="InterPro" id="IPR013815">
    <property type="entry name" value="ATP_grasp_subdomain_1"/>
</dbReference>
<dbReference type="InterPro" id="IPR000291">
    <property type="entry name" value="D-Ala_lig_Van_CS"/>
</dbReference>
<dbReference type="InterPro" id="IPR005905">
    <property type="entry name" value="D_ala_D_ala"/>
</dbReference>
<dbReference type="InterPro" id="IPR011095">
    <property type="entry name" value="Dala_Dala_lig_C"/>
</dbReference>
<dbReference type="InterPro" id="IPR011127">
    <property type="entry name" value="Dala_Dala_lig_N"/>
</dbReference>
<dbReference type="InterPro" id="IPR016185">
    <property type="entry name" value="PreATP-grasp_dom_sf"/>
</dbReference>
<dbReference type="NCBIfam" id="TIGR01205">
    <property type="entry name" value="D_ala_D_alaTIGR"/>
    <property type="match status" value="1"/>
</dbReference>
<dbReference type="NCBIfam" id="NF002528">
    <property type="entry name" value="PRK01966.1-4"/>
    <property type="match status" value="1"/>
</dbReference>
<dbReference type="PANTHER" id="PTHR23132">
    <property type="entry name" value="D-ALANINE--D-ALANINE LIGASE"/>
    <property type="match status" value="1"/>
</dbReference>
<dbReference type="PANTHER" id="PTHR23132:SF25">
    <property type="entry name" value="D-ALANINE--D-ALANINE LIGASE A"/>
    <property type="match status" value="1"/>
</dbReference>
<dbReference type="Pfam" id="PF07478">
    <property type="entry name" value="Dala_Dala_lig_C"/>
    <property type="match status" value="1"/>
</dbReference>
<dbReference type="Pfam" id="PF01820">
    <property type="entry name" value="Dala_Dala_lig_N"/>
    <property type="match status" value="1"/>
</dbReference>
<dbReference type="PIRSF" id="PIRSF039102">
    <property type="entry name" value="Ddl/VanB"/>
    <property type="match status" value="1"/>
</dbReference>
<dbReference type="SUPFAM" id="SSF56059">
    <property type="entry name" value="Glutathione synthetase ATP-binding domain-like"/>
    <property type="match status" value="1"/>
</dbReference>
<dbReference type="SUPFAM" id="SSF52440">
    <property type="entry name" value="PreATP-grasp domain"/>
    <property type="match status" value="1"/>
</dbReference>
<dbReference type="PROSITE" id="PS50975">
    <property type="entry name" value="ATP_GRASP"/>
    <property type="match status" value="1"/>
</dbReference>
<dbReference type="PROSITE" id="PS00843">
    <property type="entry name" value="DALA_DALA_LIGASE_1"/>
    <property type="match status" value="1"/>
</dbReference>
<dbReference type="PROSITE" id="PS00844">
    <property type="entry name" value="DALA_DALA_LIGASE_2"/>
    <property type="match status" value="1"/>
</dbReference>
<name>DDL_ENTGA</name>
<proteinExistence type="inferred from homology"/>
<gene>
    <name type="primary">ddl</name>
</gene>
<feature type="chain" id="PRO_0000177822" description="D-alanine--D-alanine ligase">
    <location>
        <begin position="1"/>
        <end position="316" status="greater than"/>
    </location>
</feature>
<feature type="domain" description="ATP-grasp">
    <location>
        <begin position="129"/>
        <end position="316" status="greater than"/>
    </location>
</feature>
<feature type="binding site" evidence="1">
    <location>
        <begin position="162"/>
        <end position="217"/>
    </location>
    <ligand>
        <name>ATP</name>
        <dbReference type="ChEBI" id="CHEBI:30616"/>
    </ligand>
</feature>
<feature type="binding site" evidence="1">
    <location>
        <position position="288"/>
    </location>
    <ligand>
        <name>Mg(2+)</name>
        <dbReference type="ChEBI" id="CHEBI:18420"/>
        <label>1</label>
    </ligand>
</feature>
<feature type="binding site" evidence="1">
    <location>
        <position position="301"/>
    </location>
    <ligand>
        <name>Mg(2+)</name>
        <dbReference type="ChEBI" id="CHEBI:18420"/>
        <label>1</label>
    </ligand>
</feature>
<feature type="binding site" evidence="1">
    <location>
        <position position="301"/>
    </location>
    <ligand>
        <name>Mg(2+)</name>
        <dbReference type="ChEBI" id="CHEBI:18420"/>
        <label>2</label>
    </ligand>
</feature>
<feature type="binding site" evidence="1">
    <location>
        <position position="303"/>
    </location>
    <ligand>
        <name>Mg(2+)</name>
        <dbReference type="ChEBI" id="CHEBI:18420"/>
        <label>2</label>
    </ligand>
</feature>
<feature type="non-terminal residue">
    <location>
        <position position="316"/>
    </location>
</feature>